<feature type="chain" id="PRO_1000205841" description="Large ribosomal subunit protein bL34">
    <location>
        <begin position="1"/>
        <end position="44"/>
    </location>
</feature>
<reference key="1">
    <citation type="journal article" date="2011" name="J. Bacteriol.">
        <title>Complete genome sequence of the metabolically versatile plant growth-promoting endophyte, Variovorax paradoxus S110.</title>
        <authorList>
            <person name="Han J.I."/>
            <person name="Choi H.K."/>
            <person name="Lee S.W."/>
            <person name="Orwin P.M."/>
            <person name="Kim J."/>
            <person name="Laroe S.L."/>
            <person name="Kim T.G."/>
            <person name="O'Neil J."/>
            <person name="Leadbetter J.R."/>
            <person name="Lee S.Y."/>
            <person name="Hur C.G."/>
            <person name="Spain J.C."/>
            <person name="Ovchinnikova G."/>
            <person name="Goodwin L."/>
            <person name="Han C."/>
        </authorList>
    </citation>
    <scope>NUCLEOTIDE SEQUENCE [LARGE SCALE GENOMIC DNA]</scope>
    <source>
        <strain>S110</strain>
    </source>
</reference>
<organism>
    <name type="scientific">Variovorax paradoxus (strain S110)</name>
    <dbReference type="NCBI Taxonomy" id="543728"/>
    <lineage>
        <taxon>Bacteria</taxon>
        <taxon>Pseudomonadati</taxon>
        <taxon>Pseudomonadota</taxon>
        <taxon>Betaproteobacteria</taxon>
        <taxon>Burkholderiales</taxon>
        <taxon>Comamonadaceae</taxon>
        <taxon>Variovorax</taxon>
    </lineage>
</organism>
<proteinExistence type="inferred from homology"/>
<evidence type="ECO:0000255" key="1">
    <source>
        <dbReference type="HAMAP-Rule" id="MF_00391"/>
    </source>
</evidence>
<evidence type="ECO:0000305" key="2"/>
<sequence length="44" mass="5110">MKRTYQASKVRRARTHGFLVRMKTRGGRAVINARRAKGRKRLAV</sequence>
<protein>
    <recommendedName>
        <fullName evidence="1">Large ribosomal subunit protein bL34</fullName>
    </recommendedName>
    <alternativeName>
        <fullName evidence="2">50S ribosomal protein L34</fullName>
    </alternativeName>
</protein>
<keyword id="KW-0687">Ribonucleoprotein</keyword>
<keyword id="KW-0689">Ribosomal protein</keyword>
<gene>
    <name evidence="1" type="primary">rpmH</name>
    <name type="ordered locus">Vapar_5302</name>
</gene>
<name>RL34_VARPS</name>
<accession>C5CSC4</accession>
<comment type="similarity">
    <text evidence="1">Belongs to the bacterial ribosomal protein bL34 family.</text>
</comment>
<dbReference type="EMBL" id="CP001635">
    <property type="protein sequence ID" value="ACS21904.1"/>
    <property type="molecule type" value="Genomic_DNA"/>
</dbReference>
<dbReference type="SMR" id="C5CSC4"/>
<dbReference type="STRING" id="543728.Vapar_5302"/>
<dbReference type="KEGG" id="vap:Vapar_5302"/>
<dbReference type="eggNOG" id="COG0230">
    <property type="taxonomic scope" value="Bacteria"/>
</dbReference>
<dbReference type="HOGENOM" id="CLU_129938_2_0_4"/>
<dbReference type="OrthoDB" id="9804164at2"/>
<dbReference type="GO" id="GO:1990904">
    <property type="term" value="C:ribonucleoprotein complex"/>
    <property type="evidence" value="ECO:0007669"/>
    <property type="project" value="UniProtKB-KW"/>
</dbReference>
<dbReference type="GO" id="GO:0005840">
    <property type="term" value="C:ribosome"/>
    <property type="evidence" value="ECO:0007669"/>
    <property type="project" value="UniProtKB-KW"/>
</dbReference>
<dbReference type="GO" id="GO:0003735">
    <property type="term" value="F:structural constituent of ribosome"/>
    <property type="evidence" value="ECO:0007669"/>
    <property type="project" value="InterPro"/>
</dbReference>
<dbReference type="GO" id="GO:0006412">
    <property type="term" value="P:translation"/>
    <property type="evidence" value="ECO:0007669"/>
    <property type="project" value="UniProtKB-UniRule"/>
</dbReference>
<dbReference type="FunFam" id="1.10.287.3980:FF:000001">
    <property type="entry name" value="Mitochondrial ribosomal protein L34"/>
    <property type="match status" value="1"/>
</dbReference>
<dbReference type="Gene3D" id="1.10.287.3980">
    <property type="match status" value="1"/>
</dbReference>
<dbReference type="HAMAP" id="MF_00391">
    <property type="entry name" value="Ribosomal_bL34"/>
    <property type="match status" value="1"/>
</dbReference>
<dbReference type="InterPro" id="IPR000271">
    <property type="entry name" value="Ribosomal_bL34"/>
</dbReference>
<dbReference type="InterPro" id="IPR020939">
    <property type="entry name" value="Ribosomal_bL34_CS"/>
</dbReference>
<dbReference type="NCBIfam" id="TIGR01030">
    <property type="entry name" value="rpmH_bact"/>
    <property type="match status" value="1"/>
</dbReference>
<dbReference type="PANTHER" id="PTHR14503:SF4">
    <property type="entry name" value="LARGE RIBOSOMAL SUBUNIT PROTEIN BL34M"/>
    <property type="match status" value="1"/>
</dbReference>
<dbReference type="PANTHER" id="PTHR14503">
    <property type="entry name" value="MITOCHONDRIAL RIBOSOMAL PROTEIN 34 FAMILY MEMBER"/>
    <property type="match status" value="1"/>
</dbReference>
<dbReference type="Pfam" id="PF00468">
    <property type="entry name" value="Ribosomal_L34"/>
    <property type="match status" value="1"/>
</dbReference>
<dbReference type="PROSITE" id="PS00784">
    <property type="entry name" value="RIBOSOMAL_L34"/>
    <property type="match status" value="1"/>
</dbReference>